<accession>Q12KC4</accession>
<gene>
    <name evidence="1" type="primary">cca</name>
    <name type="ordered locus">Sden_2823</name>
</gene>
<sequence>MKIYLVGGAVRDALLGLTIKDKDYLVVGSTPAEMLSLGYRQVGKDFPVFLHPKNQQEYALARIERKTGTGYDGFSCDANEHVSLEEDLLRRDLTINAIAQDEQGQLHDPYGGQQDIIHKQLRHVSQAFVEDPLRVLRVARFAARFHSLGFTVATETMALMSQISLSGELEHLTAERVWQECERALATDEPQVFFEVLAQCGALEVLFPEIHALFGVPQPEKWHPEIDTGKHTLLSLKQASLLTDDMAIRFATLVHDLGKALSPKESLPKHHGHGQKGLPLIKQFCQRLRVPNDYRDLALLVSDQHQNIHNAFELKASTLVSLFDKGDFWRKPERLNGLLSACIADIRGRTGLEKSAYPQAAYIEHCFQLAKQVEVQKIIADGFIGADIKNQLNRLRILAIDEYKQSLIKKQPN</sequence>
<comment type="function">
    <text evidence="1">Catalyzes the addition and repair of the essential 3'-terminal CCA sequence in tRNAs without using a nucleic acid template. Adds these three nucleotides in the order of C, C, and A to the tRNA nucleotide-73, using CTP and ATP as substrates and producing inorganic pyrophosphate. tRNA 3'-terminal CCA addition is required both for tRNA processing and repair. Also involved in tRNA surveillance by mediating tandem CCA addition to generate a CCACCA at the 3' terminus of unstable tRNAs. While stable tRNAs receive only 3'-terminal CCA, unstable tRNAs are marked with CCACCA and rapidly degraded.</text>
</comment>
<comment type="catalytic activity">
    <reaction evidence="1">
        <text>a tRNA precursor + 2 CTP + ATP = a tRNA with a 3' CCA end + 3 diphosphate</text>
        <dbReference type="Rhea" id="RHEA:14433"/>
        <dbReference type="Rhea" id="RHEA-COMP:10465"/>
        <dbReference type="Rhea" id="RHEA-COMP:10468"/>
        <dbReference type="ChEBI" id="CHEBI:30616"/>
        <dbReference type="ChEBI" id="CHEBI:33019"/>
        <dbReference type="ChEBI" id="CHEBI:37563"/>
        <dbReference type="ChEBI" id="CHEBI:74896"/>
        <dbReference type="ChEBI" id="CHEBI:83071"/>
        <dbReference type="EC" id="2.7.7.72"/>
    </reaction>
</comment>
<comment type="catalytic activity">
    <reaction evidence="1">
        <text>a tRNA with a 3' CCA end + 2 CTP + ATP = a tRNA with a 3' CCACCA end + 3 diphosphate</text>
        <dbReference type="Rhea" id="RHEA:76235"/>
        <dbReference type="Rhea" id="RHEA-COMP:10468"/>
        <dbReference type="Rhea" id="RHEA-COMP:18655"/>
        <dbReference type="ChEBI" id="CHEBI:30616"/>
        <dbReference type="ChEBI" id="CHEBI:33019"/>
        <dbReference type="ChEBI" id="CHEBI:37563"/>
        <dbReference type="ChEBI" id="CHEBI:83071"/>
        <dbReference type="ChEBI" id="CHEBI:195187"/>
    </reaction>
    <physiologicalReaction direction="left-to-right" evidence="1">
        <dbReference type="Rhea" id="RHEA:76236"/>
    </physiologicalReaction>
</comment>
<comment type="cofactor">
    <cofactor evidence="1">
        <name>Mg(2+)</name>
        <dbReference type="ChEBI" id="CHEBI:18420"/>
    </cofactor>
    <text evidence="1">Magnesium is required for nucleotidyltransferase activity.</text>
</comment>
<comment type="cofactor">
    <cofactor evidence="1">
        <name>Ni(2+)</name>
        <dbReference type="ChEBI" id="CHEBI:49786"/>
    </cofactor>
    <text evidence="1">Nickel for phosphatase activity.</text>
</comment>
<comment type="subunit">
    <text evidence="1">Monomer. Can also form homodimers and oligomers.</text>
</comment>
<comment type="domain">
    <text evidence="1">Comprises two domains: an N-terminal domain containing the nucleotidyltransferase activity and a C-terminal HD domain associated with both phosphodiesterase and phosphatase activities.</text>
</comment>
<comment type="miscellaneous">
    <text evidence="1">A single active site specifically recognizes both ATP and CTP and is responsible for their addition.</text>
</comment>
<comment type="similarity">
    <text evidence="1">Belongs to the tRNA nucleotidyltransferase/poly(A) polymerase family. Bacterial CCA-adding enzyme type 1 subfamily.</text>
</comment>
<keyword id="KW-0067">ATP-binding</keyword>
<keyword id="KW-0378">Hydrolase</keyword>
<keyword id="KW-0460">Magnesium</keyword>
<keyword id="KW-0479">Metal-binding</keyword>
<keyword id="KW-0511">Multifunctional enzyme</keyword>
<keyword id="KW-0533">Nickel</keyword>
<keyword id="KW-0547">Nucleotide-binding</keyword>
<keyword id="KW-0548">Nucleotidyltransferase</keyword>
<keyword id="KW-1185">Reference proteome</keyword>
<keyword id="KW-0692">RNA repair</keyword>
<keyword id="KW-0694">RNA-binding</keyword>
<keyword id="KW-0808">Transferase</keyword>
<keyword id="KW-0819">tRNA processing</keyword>
<name>CCA_SHEDO</name>
<dbReference type="EC" id="2.7.7.72" evidence="1"/>
<dbReference type="EC" id="3.1.3.-" evidence="1"/>
<dbReference type="EC" id="3.1.4.-" evidence="1"/>
<dbReference type="EMBL" id="CP000302">
    <property type="protein sequence ID" value="ABE56102.1"/>
    <property type="molecule type" value="Genomic_DNA"/>
</dbReference>
<dbReference type="RefSeq" id="WP_011497252.1">
    <property type="nucleotide sequence ID" value="NC_007954.1"/>
</dbReference>
<dbReference type="SMR" id="Q12KC4"/>
<dbReference type="STRING" id="318161.Sden_2823"/>
<dbReference type="KEGG" id="sdn:Sden_2823"/>
<dbReference type="eggNOG" id="COG0617">
    <property type="taxonomic scope" value="Bacteria"/>
</dbReference>
<dbReference type="HOGENOM" id="CLU_015961_1_1_6"/>
<dbReference type="OrthoDB" id="9805698at2"/>
<dbReference type="Proteomes" id="UP000001982">
    <property type="component" value="Chromosome"/>
</dbReference>
<dbReference type="GO" id="GO:0005524">
    <property type="term" value="F:ATP binding"/>
    <property type="evidence" value="ECO:0007669"/>
    <property type="project" value="UniProtKB-UniRule"/>
</dbReference>
<dbReference type="GO" id="GO:0004810">
    <property type="term" value="F:CCA tRNA nucleotidyltransferase activity"/>
    <property type="evidence" value="ECO:0007669"/>
    <property type="project" value="UniProtKB-UniRule"/>
</dbReference>
<dbReference type="GO" id="GO:0004112">
    <property type="term" value="F:cyclic-nucleotide phosphodiesterase activity"/>
    <property type="evidence" value="ECO:0007669"/>
    <property type="project" value="UniProtKB-UniRule"/>
</dbReference>
<dbReference type="GO" id="GO:0000287">
    <property type="term" value="F:magnesium ion binding"/>
    <property type="evidence" value="ECO:0007669"/>
    <property type="project" value="UniProtKB-UniRule"/>
</dbReference>
<dbReference type="GO" id="GO:0016791">
    <property type="term" value="F:phosphatase activity"/>
    <property type="evidence" value="ECO:0007669"/>
    <property type="project" value="UniProtKB-UniRule"/>
</dbReference>
<dbReference type="GO" id="GO:0000049">
    <property type="term" value="F:tRNA binding"/>
    <property type="evidence" value="ECO:0007669"/>
    <property type="project" value="UniProtKB-UniRule"/>
</dbReference>
<dbReference type="GO" id="GO:0042245">
    <property type="term" value="P:RNA repair"/>
    <property type="evidence" value="ECO:0007669"/>
    <property type="project" value="UniProtKB-KW"/>
</dbReference>
<dbReference type="GO" id="GO:0001680">
    <property type="term" value="P:tRNA 3'-terminal CCA addition"/>
    <property type="evidence" value="ECO:0007669"/>
    <property type="project" value="UniProtKB-UniRule"/>
</dbReference>
<dbReference type="CDD" id="cd05398">
    <property type="entry name" value="NT_ClassII-CCAase"/>
    <property type="match status" value="1"/>
</dbReference>
<dbReference type="Gene3D" id="3.30.460.10">
    <property type="entry name" value="Beta Polymerase, domain 2"/>
    <property type="match status" value="1"/>
</dbReference>
<dbReference type="Gene3D" id="1.10.3090.10">
    <property type="entry name" value="cca-adding enzyme, domain 2"/>
    <property type="match status" value="1"/>
</dbReference>
<dbReference type="HAMAP" id="MF_01261">
    <property type="entry name" value="CCA_bact_type1"/>
    <property type="match status" value="1"/>
</dbReference>
<dbReference type="HAMAP" id="MF_01262">
    <property type="entry name" value="CCA_bact_type2"/>
    <property type="match status" value="1"/>
</dbReference>
<dbReference type="InterPro" id="IPR012006">
    <property type="entry name" value="CCA_bact"/>
</dbReference>
<dbReference type="InterPro" id="IPR006674">
    <property type="entry name" value="HD_domain"/>
</dbReference>
<dbReference type="InterPro" id="IPR043519">
    <property type="entry name" value="NT_sf"/>
</dbReference>
<dbReference type="InterPro" id="IPR002646">
    <property type="entry name" value="PolA_pol_head_dom"/>
</dbReference>
<dbReference type="InterPro" id="IPR032828">
    <property type="entry name" value="PolyA_RNA-bd"/>
</dbReference>
<dbReference type="InterPro" id="IPR050124">
    <property type="entry name" value="tRNA_CCA-adding_enzyme"/>
</dbReference>
<dbReference type="NCBIfam" id="NF008137">
    <property type="entry name" value="PRK10885.1"/>
    <property type="match status" value="1"/>
</dbReference>
<dbReference type="PANTHER" id="PTHR47545">
    <property type="entry name" value="MULTIFUNCTIONAL CCA PROTEIN"/>
    <property type="match status" value="1"/>
</dbReference>
<dbReference type="PANTHER" id="PTHR47545:SF1">
    <property type="entry name" value="MULTIFUNCTIONAL CCA PROTEIN"/>
    <property type="match status" value="1"/>
</dbReference>
<dbReference type="Pfam" id="PF01966">
    <property type="entry name" value="HD"/>
    <property type="match status" value="1"/>
</dbReference>
<dbReference type="Pfam" id="PF01743">
    <property type="entry name" value="PolyA_pol"/>
    <property type="match status" value="1"/>
</dbReference>
<dbReference type="Pfam" id="PF12627">
    <property type="entry name" value="PolyA_pol_RNAbd"/>
    <property type="match status" value="1"/>
</dbReference>
<dbReference type="PIRSF" id="PIRSF000813">
    <property type="entry name" value="CCA_bact"/>
    <property type="match status" value="1"/>
</dbReference>
<dbReference type="SUPFAM" id="SSF81301">
    <property type="entry name" value="Nucleotidyltransferase"/>
    <property type="match status" value="1"/>
</dbReference>
<dbReference type="SUPFAM" id="SSF81891">
    <property type="entry name" value="Poly A polymerase C-terminal region-like"/>
    <property type="match status" value="1"/>
</dbReference>
<dbReference type="PROSITE" id="PS51831">
    <property type="entry name" value="HD"/>
    <property type="match status" value="1"/>
</dbReference>
<reference key="1">
    <citation type="submission" date="2006-03" db="EMBL/GenBank/DDBJ databases">
        <title>Complete sequence of Shewanella denitrificans OS217.</title>
        <authorList>
            <consortium name="US DOE Joint Genome Institute"/>
            <person name="Copeland A."/>
            <person name="Lucas S."/>
            <person name="Lapidus A."/>
            <person name="Barry K."/>
            <person name="Detter J.C."/>
            <person name="Glavina del Rio T."/>
            <person name="Hammon N."/>
            <person name="Israni S."/>
            <person name="Dalin E."/>
            <person name="Tice H."/>
            <person name="Pitluck S."/>
            <person name="Brettin T."/>
            <person name="Bruce D."/>
            <person name="Han C."/>
            <person name="Tapia R."/>
            <person name="Gilna P."/>
            <person name="Kiss H."/>
            <person name="Schmutz J."/>
            <person name="Larimer F."/>
            <person name="Land M."/>
            <person name="Hauser L."/>
            <person name="Kyrpides N."/>
            <person name="Lykidis A."/>
            <person name="Richardson P."/>
        </authorList>
    </citation>
    <scope>NUCLEOTIDE SEQUENCE [LARGE SCALE GENOMIC DNA]</scope>
    <source>
        <strain>OS217 / ATCC BAA-1090 / DSM 15013</strain>
    </source>
</reference>
<feature type="chain" id="PRO_1000054293" description="Multifunctional CCA protein">
    <location>
        <begin position="1"/>
        <end position="413"/>
    </location>
</feature>
<feature type="domain" description="HD" evidence="1">
    <location>
        <begin position="228"/>
        <end position="329"/>
    </location>
</feature>
<feature type="binding site" evidence="1">
    <location>
        <position position="8"/>
    </location>
    <ligand>
        <name>ATP</name>
        <dbReference type="ChEBI" id="CHEBI:30616"/>
    </ligand>
</feature>
<feature type="binding site" evidence="1">
    <location>
        <position position="8"/>
    </location>
    <ligand>
        <name>CTP</name>
        <dbReference type="ChEBI" id="CHEBI:37563"/>
    </ligand>
</feature>
<feature type="binding site" evidence="1">
    <location>
        <position position="11"/>
    </location>
    <ligand>
        <name>ATP</name>
        <dbReference type="ChEBI" id="CHEBI:30616"/>
    </ligand>
</feature>
<feature type="binding site" evidence="1">
    <location>
        <position position="11"/>
    </location>
    <ligand>
        <name>CTP</name>
        <dbReference type="ChEBI" id="CHEBI:37563"/>
    </ligand>
</feature>
<feature type="binding site" evidence="1">
    <location>
        <position position="21"/>
    </location>
    <ligand>
        <name>Mg(2+)</name>
        <dbReference type="ChEBI" id="CHEBI:18420"/>
    </ligand>
</feature>
<feature type="binding site" evidence="1">
    <location>
        <position position="23"/>
    </location>
    <ligand>
        <name>Mg(2+)</name>
        <dbReference type="ChEBI" id="CHEBI:18420"/>
    </ligand>
</feature>
<feature type="binding site" evidence="1">
    <location>
        <position position="91"/>
    </location>
    <ligand>
        <name>ATP</name>
        <dbReference type="ChEBI" id="CHEBI:30616"/>
    </ligand>
</feature>
<feature type="binding site" evidence="1">
    <location>
        <position position="91"/>
    </location>
    <ligand>
        <name>CTP</name>
        <dbReference type="ChEBI" id="CHEBI:37563"/>
    </ligand>
</feature>
<feature type="binding site" evidence="1">
    <location>
        <position position="137"/>
    </location>
    <ligand>
        <name>ATP</name>
        <dbReference type="ChEBI" id="CHEBI:30616"/>
    </ligand>
</feature>
<feature type="binding site" evidence="1">
    <location>
        <position position="137"/>
    </location>
    <ligand>
        <name>CTP</name>
        <dbReference type="ChEBI" id="CHEBI:37563"/>
    </ligand>
</feature>
<feature type="binding site" evidence="1">
    <location>
        <position position="140"/>
    </location>
    <ligand>
        <name>ATP</name>
        <dbReference type="ChEBI" id="CHEBI:30616"/>
    </ligand>
</feature>
<feature type="binding site" evidence="1">
    <location>
        <position position="140"/>
    </location>
    <ligand>
        <name>CTP</name>
        <dbReference type="ChEBI" id="CHEBI:37563"/>
    </ligand>
</feature>
<proteinExistence type="inferred from homology"/>
<protein>
    <recommendedName>
        <fullName evidence="1">Multifunctional CCA protein</fullName>
    </recommendedName>
    <domain>
        <recommendedName>
            <fullName evidence="1">CCA-adding enzyme</fullName>
            <ecNumber evidence="1">2.7.7.72</ecNumber>
        </recommendedName>
        <alternativeName>
            <fullName evidence="1">CCA tRNA nucleotidyltransferase</fullName>
        </alternativeName>
        <alternativeName>
            <fullName evidence="1">tRNA CCA-pyrophosphorylase</fullName>
        </alternativeName>
        <alternativeName>
            <fullName evidence="1">tRNA adenylyl-/cytidylyl-transferase</fullName>
        </alternativeName>
        <alternativeName>
            <fullName evidence="1">tRNA nucleotidyltransferase</fullName>
        </alternativeName>
        <alternativeName>
            <fullName evidence="1">tRNA-NT</fullName>
        </alternativeName>
    </domain>
    <domain>
        <recommendedName>
            <fullName evidence="1">2'-nucleotidase</fullName>
            <ecNumber evidence="1">3.1.3.-</ecNumber>
        </recommendedName>
    </domain>
    <domain>
        <recommendedName>
            <fullName evidence="1">2',3'-cyclic phosphodiesterase</fullName>
            <ecNumber evidence="1">3.1.4.-</ecNumber>
        </recommendedName>
    </domain>
    <domain>
        <recommendedName>
            <fullName evidence="1">Phosphatase</fullName>
            <ecNumber evidence="1">3.1.3.-</ecNumber>
        </recommendedName>
    </domain>
</protein>
<organism>
    <name type="scientific">Shewanella denitrificans (strain OS217 / ATCC BAA-1090 / DSM 15013)</name>
    <dbReference type="NCBI Taxonomy" id="318161"/>
    <lineage>
        <taxon>Bacteria</taxon>
        <taxon>Pseudomonadati</taxon>
        <taxon>Pseudomonadota</taxon>
        <taxon>Gammaproteobacteria</taxon>
        <taxon>Alteromonadales</taxon>
        <taxon>Shewanellaceae</taxon>
        <taxon>Shewanella</taxon>
    </lineage>
</organism>
<evidence type="ECO:0000255" key="1">
    <source>
        <dbReference type="HAMAP-Rule" id="MF_01261"/>
    </source>
</evidence>